<accession>Q0CPV5</accession>
<comment type="function">
    <text evidence="1">Component of the eukaryotic translation initiation factor 3 (eIF-3) complex, which is involved in protein synthesis of a specialized repertoire of mRNAs and, together with other initiation factors, stimulates binding of mRNA and methionyl-tRNAi to the 40S ribosome. The eIF-3 complex specifically targets and initiates translation of a subset of mRNAs involved in cell proliferation.</text>
</comment>
<comment type="subunit">
    <text evidence="1">Component of the eukaryotic translation initiation factor 3 (eIF-3) complex.</text>
</comment>
<comment type="subcellular location">
    <subcellularLocation>
        <location evidence="1">Cytoplasm</location>
    </subcellularLocation>
</comment>
<comment type="similarity">
    <text evidence="1">Belongs to the eIF-3 subunit M family.</text>
</comment>
<evidence type="ECO:0000255" key="1">
    <source>
        <dbReference type="HAMAP-Rule" id="MF_03012"/>
    </source>
</evidence>
<evidence type="ECO:0000255" key="2">
    <source>
        <dbReference type="PROSITE-ProRule" id="PRU01185"/>
    </source>
</evidence>
<evidence type="ECO:0000256" key="3">
    <source>
        <dbReference type="SAM" id="MobiDB-lite"/>
    </source>
</evidence>
<name>EIF3M_ASPTN</name>
<organism>
    <name type="scientific">Aspergillus terreus (strain NIH 2624 / FGSC A1156)</name>
    <dbReference type="NCBI Taxonomy" id="341663"/>
    <lineage>
        <taxon>Eukaryota</taxon>
        <taxon>Fungi</taxon>
        <taxon>Dikarya</taxon>
        <taxon>Ascomycota</taxon>
        <taxon>Pezizomycotina</taxon>
        <taxon>Eurotiomycetes</taxon>
        <taxon>Eurotiomycetidae</taxon>
        <taxon>Eurotiales</taxon>
        <taxon>Aspergillaceae</taxon>
        <taxon>Aspergillus</taxon>
        <taxon>Aspergillus subgen. Circumdati</taxon>
    </lineage>
</organism>
<gene>
    <name type="ORF">ATEG_04279</name>
</gene>
<feature type="chain" id="PRO_0000366015" description="Eukaryotic translation initiation factor 3 subunit M">
    <location>
        <begin position="1"/>
        <end position="461"/>
    </location>
</feature>
<feature type="domain" description="PCI" evidence="2">
    <location>
        <begin position="205"/>
        <end position="376"/>
    </location>
</feature>
<feature type="region of interest" description="Disordered" evidence="3">
    <location>
        <begin position="42"/>
        <end position="61"/>
    </location>
</feature>
<feature type="region of interest" description="Disordered" evidence="3">
    <location>
        <begin position="422"/>
        <end position="461"/>
    </location>
</feature>
<feature type="compositionally biased region" description="Basic and acidic residues" evidence="3">
    <location>
        <begin position="431"/>
        <end position="444"/>
    </location>
</feature>
<feature type="compositionally biased region" description="Low complexity" evidence="3">
    <location>
        <begin position="445"/>
        <end position="461"/>
    </location>
</feature>
<proteinExistence type="inferred from homology"/>
<keyword id="KW-0963">Cytoplasm</keyword>
<keyword id="KW-0396">Initiation factor</keyword>
<keyword id="KW-0648">Protein biosynthesis</keyword>
<keyword id="KW-1185">Reference proteome</keyword>
<sequence>MPAPSTTLLIEGSFSELADEFAQYIDALRKTEPSLQAELSPLLEPLRQQEQSDAEPDRKQRDEVLKKLVSAATVLNTAPEKEIISAYNLLVHLVHHASDPDMFLSRICSYLAKPITSSPQFGPSLAISILSTIFNTLPATDSSRYHVLLAIVAVIRQSAQGVAFEALKPQLTAQLPTWLAAWELDEDEAQRLHLAIADAAQAAGDQELAQTHVVQALQTIPAADASKKEARDLAVRALTSALSHPAVFDFTPLTASDAVQALRTSDSTLFELLEIFTADTLDAYEAFVAATPLASISGGVLAPAADALQNKMRLLTLASLAASTPSRSLPYATIASALRVPAEDVEKWVIDTIRAGLVEGKLSQLRSEFLVHRATYRVFGEKQWAEVQGRLMVWRRSLENVLGVVRSERERFIRENLQAAQAAEEAAQGKSGDKKGDRRQRRDQPQQSQPAPEAATAVAAE</sequence>
<dbReference type="EMBL" id="CH476599">
    <property type="protein sequence ID" value="EAU34726.1"/>
    <property type="molecule type" value="Genomic_DNA"/>
</dbReference>
<dbReference type="RefSeq" id="XP_001213457.1">
    <property type="nucleotide sequence ID" value="XM_001213457.1"/>
</dbReference>
<dbReference type="SMR" id="Q0CPV5"/>
<dbReference type="STRING" id="341663.Q0CPV5"/>
<dbReference type="EnsemblFungi" id="EAU34726">
    <property type="protein sequence ID" value="EAU34726"/>
    <property type="gene ID" value="ATEG_04279"/>
</dbReference>
<dbReference type="GeneID" id="4320491"/>
<dbReference type="VEuPathDB" id="FungiDB:ATEG_04279"/>
<dbReference type="eggNOG" id="KOG2753">
    <property type="taxonomic scope" value="Eukaryota"/>
</dbReference>
<dbReference type="HOGENOM" id="CLU_035254_0_1_1"/>
<dbReference type="OMA" id="FNDEHKG"/>
<dbReference type="OrthoDB" id="10267031at2759"/>
<dbReference type="Proteomes" id="UP000007963">
    <property type="component" value="Unassembled WGS sequence"/>
</dbReference>
<dbReference type="GO" id="GO:0016282">
    <property type="term" value="C:eukaryotic 43S preinitiation complex"/>
    <property type="evidence" value="ECO:0007669"/>
    <property type="project" value="UniProtKB-UniRule"/>
</dbReference>
<dbReference type="GO" id="GO:0033290">
    <property type="term" value="C:eukaryotic 48S preinitiation complex"/>
    <property type="evidence" value="ECO:0007669"/>
    <property type="project" value="UniProtKB-UniRule"/>
</dbReference>
<dbReference type="GO" id="GO:0071541">
    <property type="term" value="C:eukaryotic translation initiation factor 3 complex, eIF3m"/>
    <property type="evidence" value="ECO:0007669"/>
    <property type="project" value="UniProtKB-UniRule"/>
</dbReference>
<dbReference type="GO" id="GO:0003743">
    <property type="term" value="F:translation initiation factor activity"/>
    <property type="evidence" value="ECO:0007669"/>
    <property type="project" value="UniProtKB-UniRule"/>
</dbReference>
<dbReference type="GO" id="GO:0001732">
    <property type="term" value="P:formation of cytoplasmic translation initiation complex"/>
    <property type="evidence" value="ECO:0007669"/>
    <property type="project" value="UniProtKB-UniRule"/>
</dbReference>
<dbReference type="HAMAP" id="MF_03012">
    <property type="entry name" value="eIF3m"/>
    <property type="match status" value="1"/>
</dbReference>
<dbReference type="InterPro" id="IPR045237">
    <property type="entry name" value="COPS7/eIF3m"/>
</dbReference>
<dbReference type="InterPro" id="IPR027528">
    <property type="entry name" value="eIF3m"/>
</dbReference>
<dbReference type="InterPro" id="IPR040750">
    <property type="entry name" value="eIF3m_C_helix"/>
</dbReference>
<dbReference type="InterPro" id="IPR000717">
    <property type="entry name" value="PCI_dom"/>
</dbReference>
<dbReference type="PANTHER" id="PTHR15350">
    <property type="entry name" value="COP9 SIGNALOSOME COMPLEX SUBUNIT 7/DENDRITIC CELL PROTEIN GA17"/>
    <property type="match status" value="1"/>
</dbReference>
<dbReference type="PANTHER" id="PTHR15350:SF2">
    <property type="entry name" value="EUKARYOTIC TRANSLATION INITIATION FACTOR 3 SUBUNIT M"/>
    <property type="match status" value="1"/>
</dbReference>
<dbReference type="Pfam" id="PF18005">
    <property type="entry name" value="eIF3m_C_helix"/>
    <property type="match status" value="1"/>
</dbReference>
<dbReference type="Pfam" id="PF01399">
    <property type="entry name" value="PCI"/>
    <property type="match status" value="1"/>
</dbReference>
<dbReference type="SMART" id="SM00088">
    <property type="entry name" value="PINT"/>
    <property type="match status" value="1"/>
</dbReference>
<dbReference type="PROSITE" id="PS50250">
    <property type="entry name" value="PCI"/>
    <property type="match status" value="1"/>
</dbReference>
<protein>
    <recommendedName>
        <fullName evidence="1">Eukaryotic translation initiation factor 3 subunit M</fullName>
        <shortName evidence="1">eIF3m</shortName>
    </recommendedName>
</protein>
<reference key="1">
    <citation type="submission" date="2005-09" db="EMBL/GenBank/DDBJ databases">
        <title>Annotation of the Aspergillus terreus NIH2624 genome.</title>
        <authorList>
            <person name="Birren B.W."/>
            <person name="Lander E.S."/>
            <person name="Galagan J.E."/>
            <person name="Nusbaum C."/>
            <person name="Devon K."/>
            <person name="Henn M."/>
            <person name="Ma L.-J."/>
            <person name="Jaffe D.B."/>
            <person name="Butler J."/>
            <person name="Alvarez P."/>
            <person name="Gnerre S."/>
            <person name="Grabherr M."/>
            <person name="Kleber M."/>
            <person name="Mauceli E.W."/>
            <person name="Brockman W."/>
            <person name="Rounsley S."/>
            <person name="Young S.K."/>
            <person name="LaButti K."/>
            <person name="Pushparaj V."/>
            <person name="DeCaprio D."/>
            <person name="Crawford M."/>
            <person name="Koehrsen M."/>
            <person name="Engels R."/>
            <person name="Montgomery P."/>
            <person name="Pearson M."/>
            <person name="Howarth C."/>
            <person name="Larson L."/>
            <person name="Luoma S."/>
            <person name="White J."/>
            <person name="Alvarado L."/>
            <person name="Kodira C.D."/>
            <person name="Zeng Q."/>
            <person name="Oleary S."/>
            <person name="Yandava C."/>
            <person name="Denning D.W."/>
            <person name="Nierman W.C."/>
            <person name="Milne T."/>
            <person name="Madden K."/>
        </authorList>
    </citation>
    <scope>NUCLEOTIDE SEQUENCE [LARGE SCALE GENOMIC DNA]</scope>
    <source>
        <strain>NIH 2624 / FGSC A1156</strain>
    </source>
</reference>